<name>THCL_PLARO</name>
<sequence>SCNCVCGFCCSCSP</sequence>
<comment type="function">
    <text>Has bacteriocidal activity against Gram-positive bacteria and a few Gram-negative bacteria. It is particularly active against anaerobes. Inhibits bacterial protein biosynthesis by preventing the formation of a stable complex between the elongation factor Tu (EF-Tu), GTP and tRNA, hindering the activation of EF-Tu.</text>
</comment>
<comment type="subcellular location">
    <subcellularLocation>
        <location evidence="3">Secreted</location>
    </subcellularLocation>
</comment>
<comment type="PTM">
    <text>Maturation of thiazole and oxazole containing antibiotics involves the enzymatic condensation of a Cys, Ser or Thr with the alpha-carbonyl of the preceding amino acid to form a thioether or ether bond, then dehydration to form a double bond with the alpha-amino nitrogen. Thiazoline or oxazoline ring are dehydrogenated to form thiazole or oxazole rings.</text>
</comment>
<comment type="PTM">
    <text>Maturation of pyridinyl containing antibiotics involves the cross-linking of a Ser and a Cys-Ser pair usually separated by 7 or 8 residues along the peptide chain. The Ser residues are dehydrated to didehydroalanines, then bonded between their beta carbons. The alpha carbonyl of the Cys condenses with alpha carbon of the first Ser to form a pyridinyl ring. The ring may be multiply dehydrogenated to form a pyridine ring with loss of the amino nitrogen of the first Ser.</text>
</comment>
<comment type="PTM">
    <text evidence="4">The amidation of Pro-14 probably does not occur by the same mechanism, oxidative cleavage of glycine, as in eukaryotes.</text>
</comment>
<comment type="PTM">
    <text>Several isomers, GE2270 A (GEA), B1, B2, C1, C2a, C2b, D1, D2, E and T, are produced. The structural differences between them lie in the extent of the modifications, methylation, methoxylation, and oxidation of the thiazole and oxazole rings, and methylation of asparagine. They are shown in PubMed:7592050. The modifications of form GE2270 A are shown here.</text>
</comment>
<comment type="mass spectrometry"/>
<comment type="miscellaneous">
    <text>Strain ATCC 23866 also produces this antibiotic.</text>
</comment>
<comment type="similarity">
    <text evidence="4">Belongs to the thiocillin family.</text>
</comment>
<evidence type="ECO:0000250" key="1"/>
<evidence type="ECO:0000269" key="2">
    <source>
    </source>
</evidence>
<evidence type="ECO:0000269" key="3">
    <source>
    </source>
</evidence>
<evidence type="ECO:0000305" key="4"/>
<evidence type="ECO:0000305" key="5">
    <source>
    </source>
</evidence>
<accession>Q7M0J8</accession>
<protein>
    <recommendedName>
        <fullName>Thiocillin GE2270</fullName>
    </recommendedName>
    <alternativeName>
        <fullName>Antibiotic GE2270</fullName>
    </alternativeName>
</protein>
<organism>
    <name type="scientific">Planobispora rosea</name>
    <dbReference type="NCBI Taxonomy" id="35762"/>
    <lineage>
        <taxon>Bacteria</taxon>
        <taxon>Bacillati</taxon>
        <taxon>Actinomycetota</taxon>
        <taxon>Actinomycetes</taxon>
        <taxon>Streptosporangiales</taxon>
        <taxon>Streptosporangiaceae</taxon>
        <taxon>Planobispora</taxon>
    </lineage>
</organism>
<proteinExistence type="evidence at protein level"/>
<feature type="peptide" id="PRO_0000363169" description="Thiocillin GE2270">
    <location>
        <begin position="1"/>
        <end position="14"/>
    </location>
</feature>
<feature type="modified residue" description="N4-methylasparagine" evidence="5">
    <location>
        <position position="3"/>
    </location>
</feature>
<feature type="modified residue" description="3-hydroxyphenylalanine" evidence="1">
    <location>
        <position position="8"/>
    </location>
</feature>
<feature type="modified residue" description="Proline amide" evidence="2">
    <location>
        <position position="14"/>
    </location>
</feature>
<feature type="cross-link" description="Pyridine-2,5-dicarboxylic acid (Ser-Ser) (with C-10)">
    <location>
        <begin position="1"/>
        <end position="11"/>
    </location>
</feature>
<feature type="cross-link" description="Pyridine-2,5-dicarboxylic acid (Ser-Cys) (with S-11)">
    <location>
        <begin position="1"/>
        <end position="10"/>
    </location>
</feature>
<feature type="cross-link" description="Thiazole-4-carboxylic acid (Ser-Cys)">
    <location>
        <begin position="1"/>
        <end position="2"/>
    </location>
</feature>
<feature type="cross-link" description="5-methylthiazole-4-carboxylic acid (Asn-Cys)">
    <location>
        <begin position="3"/>
        <end position="4"/>
    </location>
</feature>
<feature type="cross-link" description="5-(methoxymethyl)thiazole-4-carboxylic acid (Val-Cys)">
    <location>
        <begin position="5"/>
        <end position="6"/>
    </location>
</feature>
<feature type="cross-link" description="Thiazole-4-carboxylic acid (Phe-Cys)">
    <location>
        <begin position="8"/>
        <end position="9"/>
    </location>
</feature>
<feature type="cross-link" description="Thiazole-4-carboxylic acid (Cys-Cys)">
    <location>
        <begin position="9"/>
        <end position="10"/>
    </location>
</feature>
<feature type="cross-link" description="Thiazole-4-carboxylic acid (Ser-Cys)">
    <location>
        <begin position="11"/>
        <end position="12"/>
    </location>
</feature>
<feature type="cross-link" description="Oxazoline-4-carboxylic acid (Cys-Ser)">
    <location>
        <begin position="12"/>
        <end position="13"/>
    </location>
</feature>
<reference key="1">
    <citation type="journal article" date="1991" name="J. Antibiot.">
        <title>Antibiotic GE2270 A: a novel inhibitor of bacterial protein synthesis. I. Isolation and characterization.</title>
        <authorList>
            <person name="Selva E."/>
            <person name="Beretta G."/>
            <person name="Montanini N."/>
            <person name="Saddler G.S."/>
            <person name="Gastaldo L."/>
            <person name="Ferrari P."/>
            <person name="Lorenzetti R."/>
            <person name="Landini P."/>
            <person name="Ripamonti F."/>
            <person name="Goldstein B.P."/>
            <person name="Berti M."/>
            <person name="Montanaro L."/>
            <person name="Denaro M."/>
        </authorList>
    </citation>
    <scope>CHARACTERIZATION</scope>
    <scope>SUBCELLULAR LOCATION</scope>
    <source>
        <strain>ATCC 53773 / GE2270</strain>
    </source>
</reference>
<reference key="2">
    <citation type="journal article" date="1995" name="Rapid Commun. Mass Spectrom.">
        <title>Contribution of mass spectrometry to the structural confirmation of components of the antibiotic GE2270 complex.</title>
        <authorList>
            <person name="Colombo L."/>
            <person name="Stella S."/>
            <person name="Selva E."/>
        </authorList>
    </citation>
    <scope>IDENTIFICATION BY MASS SPECTROMETRY</scope>
    <source>
        <strain>ATCC 53773 / GE2270</strain>
    </source>
</reference>
<reference key="3">
    <citation type="journal article" date="2006" name="FEBS Lett.">
        <title>Elongation factor Tu-targeted antibiotics: four different structures, two mechanisms of action.</title>
        <authorList>
            <person name="Parmeggiani A."/>
            <person name="Nissen P."/>
        </authorList>
    </citation>
    <scope>MECHANISM OF ACTION ON EF-TU</scope>
</reference>
<reference key="4">
    <citation type="journal article" date="2007" name="Angew. Chem. Int. Ed.">
        <title>Total synthesis of the thiazolyl peptide GE2270 A.</title>
        <authorList>
            <person name="Muller H.M."/>
            <person name="Delgado O."/>
            <person name="Bach T."/>
        </authorList>
    </citation>
    <scope>STRUCTURE VERIFICATION BY CHEMICAL SYNTHESIS</scope>
</reference>
<reference key="5">
    <citation type="journal article" date="1991" name="J. Antibiot.">
        <title>Antibiotic GE2270 A: a novel inhibitor of bacterial protein synthesis. II. Structure elucidation.</title>
        <authorList>
            <person name="Kettenring J."/>
            <person name="Colombo L."/>
            <person name="Ferrari P."/>
            <person name="Tavecchia P."/>
            <person name="Nebuloni M."/>
            <person name="Vekey K."/>
            <person name="Gallo G.G."/>
            <person name="Selva E."/>
        </authorList>
    </citation>
    <scope>STRUCTURE BY NMR</scope>
    <scope>AMIDATION AT PRO-14</scope>
    <scope>MASS SPECTROMETRY</scope>
    <source>
        <strain>ATCC 53773 / GE2270</strain>
    </source>
</reference>
<reference key="6">
    <citation type="journal article" date="1994" name="J. Antibiot.">
        <title>Revised structure of the antibiotic GE 2270A.</title>
        <authorList>
            <person name="Tavecchia P."/>
            <person name="Gentili P."/>
            <person name="Kurz M."/>
            <person name="Sottani C."/>
            <person name="Bonfichi R."/>
            <person name="Lociuro S."/>
            <person name="Selva E."/>
        </authorList>
    </citation>
    <scope>SEQUENCE REVISION</scope>
    <source>
        <strain>ATCC 53773 / GE2270</strain>
    </source>
</reference>
<reference key="7">
    <citation type="journal article" date="1995" name="J. Antibiot.">
        <title>Components of the GE2270 complex produced by Planobispora rosea ATCC 53773.</title>
        <authorList>
            <person name="Selva E."/>
            <person name="Ferrari P."/>
            <person name="Kurz M."/>
            <person name="Tavecchia P."/>
            <person name="Colombo L."/>
            <person name="Stella S."/>
            <person name="Restelli E."/>
            <person name="Goldstein B.P."/>
            <person name="Ripamonti F."/>
            <person name="Denaro M."/>
        </authorList>
    </citation>
    <scope>STRUCTURE BY NMR</scope>
    <scope>METHYLATION AT ASN-3</scope>
    <source>
        <strain>ATCC 53773 / GE2270</strain>
    </source>
</reference>
<reference key="8">
    <citation type="journal article" date="2000" name="Biochemistry">
        <title>Structure of an EF-Tu complex with a thiazolyl peptide antibiotic determined at 2.35 A resolution: atomic basis for GE2270A inhibition of EF-Tu.</title>
        <authorList>
            <person name="Heffron S.E."/>
            <person name="Jurnak F."/>
        </authorList>
    </citation>
    <scope>X-RAY CRYSTALLOGRAPHY (2.35 ANGSTROMS) IN COMPLEX WITH EF-TU</scope>
</reference>
<reference key="9">
    <citation type="journal article" date="2006" name="Biochemistry">
        <title>Structural basis of the action of pulvomycin and GE2270 A on elongation factor Tu.</title>
        <authorList>
            <person name="Parmeggiani A."/>
            <person name="Krab I.M."/>
            <person name="Okamura S."/>
            <person name="Nielsen R.C."/>
            <person name="Nyborg J."/>
            <person name="Nissen P."/>
        </authorList>
    </citation>
    <scope>X-RAY CRYSTALLOGRAPHY (1.4 ANGSTROMS) IN COMPLEX WITH EF-TU</scope>
</reference>
<keyword id="KW-0002">3D-structure</keyword>
<keyword id="KW-0027">Amidation</keyword>
<keyword id="KW-0044">Antibiotic</keyword>
<keyword id="KW-0929">Antimicrobial</keyword>
<keyword id="KW-0078">Bacteriocin</keyword>
<keyword id="KW-0379">Hydroxylation</keyword>
<keyword id="KW-0488">Methylation</keyword>
<keyword id="KW-0964">Secreted</keyword>
<keyword id="KW-0883">Thioether bond</keyword>
<dbReference type="PIR" id="A61210">
    <property type="entry name" value="A61210"/>
</dbReference>
<dbReference type="PDB" id="1D8T">
    <property type="method" value="X-ray"/>
    <property type="resolution" value="2.35 A"/>
    <property type="chains" value="C/D=1-14"/>
</dbReference>
<dbReference type="PDB" id="2C77">
    <property type="method" value="X-ray"/>
    <property type="resolution" value="1.60 A"/>
    <property type="chains" value="B=1-14"/>
</dbReference>
<dbReference type="PDB" id="3U2Q">
    <property type="method" value="X-ray"/>
    <property type="resolution" value="2.70 A"/>
    <property type="chains" value="B=1-10"/>
</dbReference>
<dbReference type="PDB" id="3U6B">
    <property type="method" value="X-ray"/>
    <property type="resolution" value="2.12 A"/>
    <property type="chains" value="C/D=1-10"/>
</dbReference>
<dbReference type="PDB" id="3U6K">
    <property type="method" value="X-ray"/>
    <property type="resolution" value="2.45 A"/>
    <property type="chains" value="C/D=1-10"/>
</dbReference>
<dbReference type="PDBsum" id="1D8T"/>
<dbReference type="PDBsum" id="2C77"/>
<dbReference type="PDBsum" id="3U2Q"/>
<dbReference type="PDBsum" id="3U6B"/>
<dbReference type="PDBsum" id="3U6K"/>
<dbReference type="SMR" id="Q7M0J8"/>
<dbReference type="iPTMnet" id="Q7M0J8"/>
<dbReference type="EvolutionaryTrace" id="Q7M0J8"/>
<dbReference type="GO" id="GO:0005576">
    <property type="term" value="C:extracellular region"/>
    <property type="evidence" value="ECO:0007669"/>
    <property type="project" value="UniProtKB-SubCell"/>
</dbReference>
<dbReference type="GO" id="GO:0042742">
    <property type="term" value="P:defense response to bacterium"/>
    <property type="evidence" value="ECO:0007669"/>
    <property type="project" value="UniProtKB-KW"/>
</dbReference>
<dbReference type="GO" id="GO:0031640">
    <property type="term" value="P:killing of cells of another organism"/>
    <property type="evidence" value="ECO:0007669"/>
    <property type="project" value="UniProtKB-KW"/>
</dbReference>